<proteinExistence type="inferred from homology"/>
<reference key="1">
    <citation type="journal article" date="2002" name="Nature">
        <title>Comparison of the genomes of two Xanthomonas pathogens with differing host specificities.</title>
        <authorList>
            <person name="da Silva A.C.R."/>
            <person name="Ferro J.A."/>
            <person name="Reinach F.C."/>
            <person name="Farah C.S."/>
            <person name="Furlan L.R."/>
            <person name="Quaggio R.B."/>
            <person name="Monteiro-Vitorello C.B."/>
            <person name="Van Sluys M.A."/>
            <person name="Almeida N.F. Jr."/>
            <person name="Alves L.M.C."/>
            <person name="do Amaral A.M."/>
            <person name="Bertolini M.C."/>
            <person name="Camargo L.E.A."/>
            <person name="Camarotte G."/>
            <person name="Cannavan F."/>
            <person name="Cardozo J."/>
            <person name="Chambergo F."/>
            <person name="Ciapina L.P."/>
            <person name="Cicarelli R.M.B."/>
            <person name="Coutinho L.L."/>
            <person name="Cursino-Santos J.R."/>
            <person name="El-Dorry H."/>
            <person name="Faria J.B."/>
            <person name="Ferreira A.J.S."/>
            <person name="Ferreira R.C.C."/>
            <person name="Ferro M.I.T."/>
            <person name="Formighieri E.F."/>
            <person name="Franco M.C."/>
            <person name="Greggio C.C."/>
            <person name="Gruber A."/>
            <person name="Katsuyama A.M."/>
            <person name="Kishi L.T."/>
            <person name="Leite R.P."/>
            <person name="Lemos E.G.M."/>
            <person name="Lemos M.V.F."/>
            <person name="Locali E.C."/>
            <person name="Machado M.A."/>
            <person name="Madeira A.M.B.N."/>
            <person name="Martinez-Rossi N.M."/>
            <person name="Martins E.C."/>
            <person name="Meidanis J."/>
            <person name="Menck C.F.M."/>
            <person name="Miyaki C.Y."/>
            <person name="Moon D.H."/>
            <person name="Moreira L.M."/>
            <person name="Novo M.T.M."/>
            <person name="Okura V.K."/>
            <person name="Oliveira M.C."/>
            <person name="Oliveira V.R."/>
            <person name="Pereira H.A."/>
            <person name="Rossi A."/>
            <person name="Sena J.A.D."/>
            <person name="Silva C."/>
            <person name="de Souza R.F."/>
            <person name="Spinola L.A.F."/>
            <person name="Takita M.A."/>
            <person name="Tamura R.E."/>
            <person name="Teixeira E.C."/>
            <person name="Tezza R.I.D."/>
            <person name="Trindade dos Santos M."/>
            <person name="Truffi D."/>
            <person name="Tsai S.M."/>
            <person name="White F.F."/>
            <person name="Setubal J.C."/>
            <person name="Kitajima J.P."/>
        </authorList>
    </citation>
    <scope>NUCLEOTIDE SEQUENCE [LARGE SCALE GENOMIC DNA]</scope>
    <source>
        <strain>ATCC 33913 / DSM 3586 / NCPPB 528 / LMG 568 / P 25</strain>
    </source>
</reference>
<accession>Q8P3I5</accession>
<name>SYGB_XANCP</name>
<feature type="chain" id="PRO_0000072939" description="Glycine--tRNA ligase beta subunit">
    <location>
        <begin position="1"/>
        <end position="698"/>
    </location>
</feature>
<protein>
    <recommendedName>
        <fullName evidence="1">Glycine--tRNA ligase beta subunit</fullName>
        <ecNumber evidence="1">6.1.1.14</ecNumber>
    </recommendedName>
    <alternativeName>
        <fullName evidence="1">Glycyl-tRNA synthetase beta subunit</fullName>
        <shortName evidence="1">GlyRS</shortName>
    </alternativeName>
</protein>
<dbReference type="EC" id="6.1.1.14" evidence="1"/>
<dbReference type="EMBL" id="AE008922">
    <property type="protein sequence ID" value="AAM43307.1"/>
    <property type="molecule type" value="Genomic_DNA"/>
</dbReference>
<dbReference type="RefSeq" id="NP_639425.1">
    <property type="nucleotide sequence ID" value="NC_003902.1"/>
</dbReference>
<dbReference type="RefSeq" id="WP_011039155.1">
    <property type="nucleotide sequence ID" value="NC_003902.1"/>
</dbReference>
<dbReference type="SMR" id="Q8P3I5"/>
<dbReference type="STRING" id="190485.XCC4086"/>
<dbReference type="EnsemblBacteria" id="AAM43307">
    <property type="protein sequence ID" value="AAM43307"/>
    <property type="gene ID" value="XCC4086"/>
</dbReference>
<dbReference type="KEGG" id="xcc:XCC4086"/>
<dbReference type="PATRIC" id="fig|190485.4.peg.4378"/>
<dbReference type="eggNOG" id="COG0751">
    <property type="taxonomic scope" value="Bacteria"/>
</dbReference>
<dbReference type="HOGENOM" id="CLU_007220_2_2_6"/>
<dbReference type="OrthoDB" id="9775440at2"/>
<dbReference type="Proteomes" id="UP000001010">
    <property type="component" value="Chromosome"/>
</dbReference>
<dbReference type="GO" id="GO:0005829">
    <property type="term" value="C:cytosol"/>
    <property type="evidence" value="ECO:0000318"/>
    <property type="project" value="GO_Central"/>
</dbReference>
<dbReference type="GO" id="GO:0004814">
    <property type="term" value="F:arginine-tRNA ligase activity"/>
    <property type="evidence" value="ECO:0007669"/>
    <property type="project" value="InterPro"/>
</dbReference>
<dbReference type="GO" id="GO:0005524">
    <property type="term" value="F:ATP binding"/>
    <property type="evidence" value="ECO:0007669"/>
    <property type="project" value="UniProtKB-UniRule"/>
</dbReference>
<dbReference type="GO" id="GO:0004820">
    <property type="term" value="F:glycine-tRNA ligase activity"/>
    <property type="evidence" value="ECO:0007669"/>
    <property type="project" value="UniProtKB-UniRule"/>
</dbReference>
<dbReference type="GO" id="GO:0006420">
    <property type="term" value="P:arginyl-tRNA aminoacylation"/>
    <property type="evidence" value="ECO:0007669"/>
    <property type="project" value="InterPro"/>
</dbReference>
<dbReference type="GO" id="GO:0006426">
    <property type="term" value="P:glycyl-tRNA aminoacylation"/>
    <property type="evidence" value="ECO:0007669"/>
    <property type="project" value="UniProtKB-UniRule"/>
</dbReference>
<dbReference type="HAMAP" id="MF_00255">
    <property type="entry name" value="Gly_tRNA_synth_beta"/>
    <property type="match status" value="1"/>
</dbReference>
<dbReference type="InterPro" id="IPR008909">
    <property type="entry name" value="DALR_anticod-bd"/>
</dbReference>
<dbReference type="InterPro" id="IPR015944">
    <property type="entry name" value="Gly-tRNA-synth_bsu"/>
</dbReference>
<dbReference type="InterPro" id="IPR006194">
    <property type="entry name" value="Gly-tRNA-synth_heterodimer"/>
</dbReference>
<dbReference type="NCBIfam" id="TIGR00211">
    <property type="entry name" value="glyS"/>
    <property type="match status" value="1"/>
</dbReference>
<dbReference type="PANTHER" id="PTHR30075:SF2">
    <property type="entry name" value="GLYCINE--TRNA LIGASE, CHLOROPLASTIC_MITOCHONDRIAL 2"/>
    <property type="match status" value="1"/>
</dbReference>
<dbReference type="PANTHER" id="PTHR30075">
    <property type="entry name" value="GLYCYL-TRNA SYNTHETASE"/>
    <property type="match status" value="1"/>
</dbReference>
<dbReference type="Pfam" id="PF05746">
    <property type="entry name" value="DALR_1"/>
    <property type="match status" value="1"/>
</dbReference>
<dbReference type="Pfam" id="PF02092">
    <property type="entry name" value="tRNA_synt_2f"/>
    <property type="match status" value="1"/>
</dbReference>
<dbReference type="PRINTS" id="PR01045">
    <property type="entry name" value="TRNASYNTHGB"/>
</dbReference>
<dbReference type="SMART" id="SM00836">
    <property type="entry name" value="DALR_1"/>
    <property type="match status" value="1"/>
</dbReference>
<dbReference type="SUPFAM" id="SSF109604">
    <property type="entry name" value="HD-domain/PDEase-like"/>
    <property type="match status" value="1"/>
</dbReference>
<dbReference type="PROSITE" id="PS50861">
    <property type="entry name" value="AA_TRNA_LIGASE_II_GLYAB"/>
    <property type="match status" value="1"/>
</dbReference>
<sequence length="698" mass="75076">MSEQLPLLIELGTEELPVKALPGLAQAFFDGVLAGLEKRGVAVTRGDAKPLSTPRRLAVLLPGVATEQPEQRSEVLGPYLNIALDAEGKPTRALAGFAAKAGIDWTALERTSDAKGERFVHRAVTPGAQAAALLPEILREAIAAMPIPKPMRWGAHEYAFARPVQWLVLLFGDTVIPAELLGVRGDRITRGHRFMHDGDIALAAPGDYIDALRAAHVLVDADARRARIVEEVDAAARQAGGSARISDDNLEQVVNLVEWPSAVLCSFERAFLAVPQEALIETMEINQKFFPVLDDGGKLTEQFIGIANIVSKDVAEVAKGYERVIRPRFADAKFFFDEDLKQGLEAMGAGLASVTYQAKLGTVADKVARVAALAEAIAPQVGADPVQARRAAELAKNDLQSRMVNEFPELQGIAGRHYAKAAGEPSEISLAIDEAYQPRFAGDDIALSPLGKVLAIAERLDTLAGGFAAGLKPTGNKDPFALRRNALGLARTVIESGFDLDLPKLIDVGLASLPDAVKPHADRNTETVRADLYDFILDRLKGYYADKGVAATHFNAVAELKPASLYDFDRRIDAIGIFATLPEAEALAAANKRIRNILRKVEGEIPGDIDTTLLREPAEEALAEAVEAAIGDTGDALHRHDYVAVLARLARLRPQVDAFFDGVMVNADDPQLRANRLALLKKLGDRLGSVAAIEHLSS</sequence>
<evidence type="ECO:0000255" key="1">
    <source>
        <dbReference type="HAMAP-Rule" id="MF_00255"/>
    </source>
</evidence>
<gene>
    <name evidence="1" type="primary">glyS</name>
    <name type="ordered locus">XCC4086</name>
</gene>
<keyword id="KW-0030">Aminoacyl-tRNA synthetase</keyword>
<keyword id="KW-0067">ATP-binding</keyword>
<keyword id="KW-0963">Cytoplasm</keyword>
<keyword id="KW-0436">Ligase</keyword>
<keyword id="KW-0547">Nucleotide-binding</keyword>
<keyword id="KW-0648">Protein biosynthesis</keyword>
<keyword id="KW-1185">Reference proteome</keyword>
<comment type="catalytic activity">
    <reaction evidence="1">
        <text>tRNA(Gly) + glycine + ATP = glycyl-tRNA(Gly) + AMP + diphosphate</text>
        <dbReference type="Rhea" id="RHEA:16013"/>
        <dbReference type="Rhea" id="RHEA-COMP:9664"/>
        <dbReference type="Rhea" id="RHEA-COMP:9683"/>
        <dbReference type="ChEBI" id="CHEBI:30616"/>
        <dbReference type="ChEBI" id="CHEBI:33019"/>
        <dbReference type="ChEBI" id="CHEBI:57305"/>
        <dbReference type="ChEBI" id="CHEBI:78442"/>
        <dbReference type="ChEBI" id="CHEBI:78522"/>
        <dbReference type="ChEBI" id="CHEBI:456215"/>
        <dbReference type="EC" id="6.1.1.14"/>
    </reaction>
</comment>
<comment type="subunit">
    <text evidence="1">Tetramer of two alpha and two beta subunits.</text>
</comment>
<comment type="subcellular location">
    <subcellularLocation>
        <location evidence="1">Cytoplasm</location>
    </subcellularLocation>
</comment>
<comment type="similarity">
    <text evidence="1">Belongs to the class-II aminoacyl-tRNA synthetase family.</text>
</comment>
<organism>
    <name type="scientific">Xanthomonas campestris pv. campestris (strain ATCC 33913 / DSM 3586 / NCPPB 528 / LMG 568 / P 25)</name>
    <dbReference type="NCBI Taxonomy" id="190485"/>
    <lineage>
        <taxon>Bacteria</taxon>
        <taxon>Pseudomonadati</taxon>
        <taxon>Pseudomonadota</taxon>
        <taxon>Gammaproteobacteria</taxon>
        <taxon>Lysobacterales</taxon>
        <taxon>Lysobacteraceae</taxon>
        <taxon>Xanthomonas</taxon>
    </lineage>
</organism>